<keyword id="KW-0030">Aminoacyl-tRNA synthetase</keyword>
<keyword id="KW-0067">ATP-binding</keyword>
<keyword id="KW-0963">Cytoplasm</keyword>
<keyword id="KW-0436">Ligase</keyword>
<keyword id="KW-0479">Metal-binding</keyword>
<keyword id="KW-0547">Nucleotide-binding</keyword>
<keyword id="KW-0648">Protein biosynthesis</keyword>
<keyword id="KW-0694">RNA-binding</keyword>
<keyword id="KW-0820">tRNA-binding</keyword>
<keyword id="KW-0862">Zinc</keyword>
<protein>
    <recommendedName>
        <fullName evidence="1">Methionine--tRNA ligase</fullName>
        <ecNumber evidence="1">6.1.1.10</ecNumber>
    </recommendedName>
    <alternativeName>
        <fullName evidence="1">Methionyl-tRNA synthetase</fullName>
        <shortName evidence="1">MetRS</shortName>
    </alternativeName>
</protein>
<comment type="function">
    <text evidence="1">Is required not only for elongation of protein synthesis but also for the initiation of all mRNA translation through initiator tRNA(fMet) aminoacylation.</text>
</comment>
<comment type="catalytic activity">
    <reaction evidence="1">
        <text>tRNA(Met) + L-methionine + ATP = L-methionyl-tRNA(Met) + AMP + diphosphate</text>
        <dbReference type="Rhea" id="RHEA:13481"/>
        <dbReference type="Rhea" id="RHEA-COMP:9667"/>
        <dbReference type="Rhea" id="RHEA-COMP:9698"/>
        <dbReference type="ChEBI" id="CHEBI:30616"/>
        <dbReference type="ChEBI" id="CHEBI:33019"/>
        <dbReference type="ChEBI" id="CHEBI:57844"/>
        <dbReference type="ChEBI" id="CHEBI:78442"/>
        <dbReference type="ChEBI" id="CHEBI:78530"/>
        <dbReference type="ChEBI" id="CHEBI:456215"/>
        <dbReference type="EC" id="6.1.1.10"/>
    </reaction>
</comment>
<comment type="cofactor">
    <cofactor evidence="1">
        <name>Zn(2+)</name>
        <dbReference type="ChEBI" id="CHEBI:29105"/>
    </cofactor>
    <text evidence="1">Binds 1 zinc ion per subunit.</text>
</comment>
<comment type="subunit">
    <text evidence="1">Homodimer.</text>
</comment>
<comment type="subcellular location">
    <subcellularLocation>
        <location evidence="1">Cytoplasm</location>
    </subcellularLocation>
</comment>
<comment type="similarity">
    <text evidence="1">Belongs to the class-I aminoacyl-tRNA synthetase family. MetG type 1 subfamily.</text>
</comment>
<feature type="chain" id="PRO_0000331869" description="Methionine--tRNA ligase">
    <location>
        <begin position="1"/>
        <end position="679"/>
    </location>
</feature>
<feature type="domain" description="tRNA-binding" evidence="1">
    <location>
        <begin position="577"/>
        <end position="679"/>
    </location>
</feature>
<feature type="short sequence motif" description="'HIGH' region">
    <location>
        <begin position="14"/>
        <end position="24"/>
    </location>
</feature>
<feature type="short sequence motif" description="'KMSKS' region">
    <location>
        <begin position="331"/>
        <end position="335"/>
    </location>
</feature>
<feature type="binding site" evidence="1">
    <location>
        <position position="145"/>
    </location>
    <ligand>
        <name>Zn(2+)</name>
        <dbReference type="ChEBI" id="CHEBI:29105"/>
    </ligand>
</feature>
<feature type="binding site" evidence="1">
    <location>
        <position position="148"/>
    </location>
    <ligand>
        <name>Zn(2+)</name>
        <dbReference type="ChEBI" id="CHEBI:29105"/>
    </ligand>
</feature>
<feature type="binding site" evidence="1">
    <location>
        <position position="158"/>
    </location>
    <ligand>
        <name>Zn(2+)</name>
        <dbReference type="ChEBI" id="CHEBI:29105"/>
    </ligand>
</feature>
<feature type="binding site" evidence="1">
    <location>
        <position position="161"/>
    </location>
    <ligand>
        <name>Zn(2+)</name>
        <dbReference type="ChEBI" id="CHEBI:29105"/>
    </ligand>
</feature>
<feature type="binding site" evidence="1">
    <location>
        <position position="334"/>
    </location>
    <ligand>
        <name>ATP</name>
        <dbReference type="ChEBI" id="CHEBI:30616"/>
    </ligand>
</feature>
<reference key="1">
    <citation type="journal article" date="2006" name="Nat. Biotechnol.">
        <title>Complete genome sequence of the entomopathogenic and metabolically versatile soil bacterium Pseudomonas entomophila.</title>
        <authorList>
            <person name="Vodovar N."/>
            <person name="Vallenet D."/>
            <person name="Cruveiller S."/>
            <person name="Rouy Z."/>
            <person name="Barbe V."/>
            <person name="Acosta C."/>
            <person name="Cattolico L."/>
            <person name="Jubin C."/>
            <person name="Lajus A."/>
            <person name="Segurens B."/>
            <person name="Vacherie B."/>
            <person name="Wincker P."/>
            <person name="Weissenbach J."/>
            <person name="Lemaitre B."/>
            <person name="Medigue C."/>
            <person name="Boccard F."/>
        </authorList>
    </citation>
    <scope>NUCLEOTIDE SEQUENCE [LARGE SCALE GENOMIC DNA]</scope>
    <source>
        <strain>L48</strain>
    </source>
</reference>
<gene>
    <name evidence="1" type="primary">metG</name>
    <name type="ordered locus">PSEEN1220</name>
</gene>
<name>SYM_PSEE4</name>
<evidence type="ECO:0000255" key="1">
    <source>
        <dbReference type="HAMAP-Rule" id="MF_00098"/>
    </source>
</evidence>
<proteinExistence type="inferred from homology"/>
<accession>Q1IDZ3</accession>
<organism>
    <name type="scientific">Pseudomonas entomophila (strain L48)</name>
    <dbReference type="NCBI Taxonomy" id="384676"/>
    <lineage>
        <taxon>Bacteria</taxon>
        <taxon>Pseudomonadati</taxon>
        <taxon>Pseudomonadota</taxon>
        <taxon>Gammaproteobacteria</taxon>
        <taxon>Pseudomonadales</taxon>
        <taxon>Pseudomonadaceae</taxon>
        <taxon>Pseudomonas</taxon>
    </lineage>
</organism>
<sequence length="679" mass="75209">MSEPRQILVTSALPYANGSIHLGHMLEYIQTDMWVRFQKLRGNQCVYVCADDAHGSAIMLRAEKEGITPEQLIANVQAEHSSDFADFLVDFDNFHSTHSEENRELSGLIYTRLRDAGHIATRSVTQYFDPEKGMFLADRFIKGTCPKCAAEDQYGDNCEKCGATYAPTELKNPKSAISGATPVLRDSQHFFFKLPDFQAMLQQWTRSGTLQDAVANKLAEWLDSGLQEWDISRDAPYFGFEIPGEPGKYFYVWLDAPIGYMASFKNLCARRPELDFDAFWSEGSKAELYHFIGKDIVNFHALFWPAMLEGSGFRKPTAVNVHGYLTVNGAKMSKSRGTFIKARTYLDHLQPEYLRYYYAAKLGRGVDDLDLNLEDFVQKVNSDLVGKVVNIASRCAGFIHKGNDGVMVAGDAAPDLTEAFLAAAPSIAEAYESRDFGRAMREIMALADRANAWIADKAPWSLAKQEGKQEEVQAICAQGINLFRQLVIFLKPVLPLLAADAEAFLNVAPLTWNDHLSRLENHKLNPFKALMSRIEPAKVEAMIAASKEDLLAAEAKAPAGNGELTKDPLSAEIEFDTFAAVDLRVALIVKAEAVPGADKLLQLTLDIGDERRNVFSGIKSAYPDPSKLEGRLTMMVANLKPRKMRFGVSEGMVMAAGPGGEEIYLLSPDSGAKPGQRIK</sequence>
<dbReference type="EC" id="6.1.1.10" evidence="1"/>
<dbReference type="EMBL" id="CT573326">
    <property type="protein sequence ID" value="CAK14115.1"/>
    <property type="molecule type" value="Genomic_DNA"/>
</dbReference>
<dbReference type="RefSeq" id="WP_011532533.1">
    <property type="nucleotide sequence ID" value="NC_008027.1"/>
</dbReference>
<dbReference type="SMR" id="Q1IDZ3"/>
<dbReference type="STRING" id="384676.PSEEN1220"/>
<dbReference type="GeneID" id="32804499"/>
<dbReference type="KEGG" id="pen:PSEEN1220"/>
<dbReference type="eggNOG" id="COG0073">
    <property type="taxonomic scope" value="Bacteria"/>
</dbReference>
<dbReference type="eggNOG" id="COG0143">
    <property type="taxonomic scope" value="Bacteria"/>
</dbReference>
<dbReference type="HOGENOM" id="CLU_009710_7_0_6"/>
<dbReference type="OrthoDB" id="9810191at2"/>
<dbReference type="Proteomes" id="UP000000658">
    <property type="component" value="Chromosome"/>
</dbReference>
<dbReference type="GO" id="GO:0005829">
    <property type="term" value="C:cytosol"/>
    <property type="evidence" value="ECO:0007669"/>
    <property type="project" value="TreeGrafter"/>
</dbReference>
<dbReference type="GO" id="GO:0005524">
    <property type="term" value="F:ATP binding"/>
    <property type="evidence" value="ECO:0007669"/>
    <property type="project" value="UniProtKB-UniRule"/>
</dbReference>
<dbReference type="GO" id="GO:0046872">
    <property type="term" value="F:metal ion binding"/>
    <property type="evidence" value="ECO:0007669"/>
    <property type="project" value="UniProtKB-KW"/>
</dbReference>
<dbReference type="GO" id="GO:0004825">
    <property type="term" value="F:methionine-tRNA ligase activity"/>
    <property type="evidence" value="ECO:0007669"/>
    <property type="project" value="UniProtKB-UniRule"/>
</dbReference>
<dbReference type="GO" id="GO:0000049">
    <property type="term" value="F:tRNA binding"/>
    <property type="evidence" value="ECO:0007669"/>
    <property type="project" value="UniProtKB-KW"/>
</dbReference>
<dbReference type="GO" id="GO:0006431">
    <property type="term" value="P:methionyl-tRNA aminoacylation"/>
    <property type="evidence" value="ECO:0007669"/>
    <property type="project" value="UniProtKB-UniRule"/>
</dbReference>
<dbReference type="CDD" id="cd07957">
    <property type="entry name" value="Anticodon_Ia_Met"/>
    <property type="match status" value="1"/>
</dbReference>
<dbReference type="CDD" id="cd00814">
    <property type="entry name" value="MetRS_core"/>
    <property type="match status" value="1"/>
</dbReference>
<dbReference type="CDD" id="cd02800">
    <property type="entry name" value="tRNA_bind_EcMetRS_like"/>
    <property type="match status" value="1"/>
</dbReference>
<dbReference type="FunFam" id="1.10.730.10:FF:000005">
    <property type="entry name" value="Methionine--tRNA ligase"/>
    <property type="match status" value="1"/>
</dbReference>
<dbReference type="FunFam" id="2.20.28.20:FF:000001">
    <property type="entry name" value="Methionine--tRNA ligase"/>
    <property type="match status" value="1"/>
</dbReference>
<dbReference type="FunFam" id="2.40.50.140:FF:000042">
    <property type="entry name" value="Methionine--tRNA ligase"/>
    <property type="match status" value="1"/>
</dbReference>
<dbReference type="Gene3D" id="3.40.50.620">
    <property type="entry name" value="HUPs"/>
    <property type="match status" value="1"/>
</dbReference>
<dbReference type="Gene3D" id="1.10.730.10">
    <property type="entry name" value="Isoleucyl-tRNA Synthetase, Domain 1"/>
    <property type="match status" value="1"/>
</dbReference>
<dbReference type="Gene3D" id="2.20.28.20">
    <property type="entry name" value="Methionyl-tRNA synthetase, Zn-domain"/>
    <property type="match status" value="1"/>
</dbReference>
<dbReference type="Gene3D" id="2.40.50.140">
    <property type="entry name" value="Nucleic acid-binding proteins"/>
    <property type="match status" value="1"/>
</dbReference>
<dbReference type="HAMAP" id="MF_00098">
    <property type="entry name" value="Met_tRNA_synth_type1"/>
    <property type="match status" value="1"/>
</dbReference>
<dbReference type="InterPro" id="IPR001412">
    <property type="entry name" value="aa-tRNA-synth_I_CS"/>
</dbReference>
<dbReference type="InterPro" id="IPR041872">
    <property type="entry name" value="Anticodon_Met"/>
</dbReference>
<dbReference type="InterPro" id="IPR004495">
    <property type="entry name" value="Met-tRNA-synth_bsu_C"/>
</dbReference>
<dbReference type="InterPro" id="IPR023458">
    <property type="entry name" value="Met-tRNA_ligase_1"/>
</dbReference>
<dbReference type="InterPro" id="IPR014758">
    <property type="entry name" value="Met-tRNA_synth"/>
</dbReference>
<dbReference type="InterPro" id="IPR015413">
    <property type="entry name" value="Methionyl/Leucyl_tRNA_Synth"/>
</dbReference>
<dbReference type="InterPro" id="IPR033911">
    <property type="entry name" value="MetRS_core"/>
</dbReference>
<dbReference type="InterPro" id="IPR029038">
    <property type="entry name" value="MetRS_Zn"/>
</dbReference>
<dbReference type="InterPro" id="IPR012340">
    <property type="entry name" value="NA-bd_OB-fold"/>
</dbReference>
<dbReference type="InterPro" id="IPR014729">
    <property type="entry name" value="Rossmann-like_a/b/a_fold"/>
</dbReference>
<dbReference type="InterPro" id="IPR002547">
    <property type="entry name" value="tRNA-bd_dom"/>
</dbReference>
<dbReference type="InterPro" id="IPR009080">
    <property type="entry name" value="tRNAsynth_Ia_anticodon-bd"/>
</dbReference>
<dbReference type="NCBIfam" id="TIGR00398">
    <property type="entry name" value="metG"/>
    <property type="match status" value="1"/>
</dbReference>
<dbReference type="NCBIfam" id="TIGR00399">
    <property type="entry name" value="metG_C_term"/>
    <property type="match status" value="1"/>
</dbReference>
<dbReference type="NCBIfam" id="NF001100">
    <property type="entry name" value="PRK00133.1"/>
    <property type="match status" value="1"/>
</dbReference>
<dbReference type="PANTHER" id="PTHR45765">
    <property type="entry name" value="METHIONINE--TRNA LIGASE"/>
    <property type="match status" value="1"/>
</dbReference>
<dbReference type="PANTHER" id="PTHR45765:SF1">
    <property type="entry name" value="METHIONINE--TRNA LIGASE, CYTOPLASMIC"/>
    <property type="match status" value="1"/>
</dbReference>
<dbReference type="Pfam" id="PF19303">
    <property type="entry name" value="Anticodon_3"/>
    <property type="match status" value="1"/>
</dbReference>
<dbReference type="Pfam" id="PF09334">
    <property type="entry name" value="tRNA-synt_1g"/>
    <property type="match status" value="1"/>
</dbReference>
<dbReference type="Pfam" id="PF01588">
    <property type="entry name" value="tRNA_bind"/>
    <property type="match status" value="1"/>
</dbReference>
<dbReference type="PRINTS" id="PR01041">
    <property type="entry name" value="TRNASYNTHMET"/>
</dbReference>
<dbReference type="SUPFAM" id="SSF47323">
    <property type="entry name" value="Anticodon-binding domain of a subclass of class I aminoacyl-tRNA synthetases"/>
    <property type="match status" value="1"/>
</dbReference>
<dbReference type="SUPFAM" id="SSF57770">
    <property type="entry name" value="Methionyl-tRNA synthetase (MetRS), Zn-domain"/>
    <property type="match status" value="1"/>
</dbReference>
<dbReference type="SUPFAM" id="SSF50249">
    <property type="entry name" value="Nucleic acid-binding proteins"/>
    <property type="match status" value="1"/>
</dbReference>
<dbReference type="SUPFAM" id="SSF52374">
    <property type="entry name" value="Nucleotidylyl transferase"/>
    <property type="match status" value="1"/>
</dbReference>
<dbReference type="PROSITE" id="PS00178">
    <property type="entry name" value="AA_TRNA_LIGASE_I"/>
    <property type="match status" value="1"/>
</dbReference>
<dbReference type="PROSITE" id="PS50886">
    <property type="entry name" value="TRBD"/>
    <property type="match status" value="1"/>
</dbReference>